<sequence length="1717" mass="184672">MEPAAAATVQRLPELGREDRASAPAAAAAAAAAAAAAAAALAAAAGGGRSPEPALTPAAPSGGNGSGSGAREEAPGEAPPGPLPGRAGGAGRRRRRGAPQPIAGGAAPVPGAGGGANSLLLRRGRLKRNLSAAAAAASSSSSSSAAAASHSPGAAGLPASCSASASLCTRSLDRKTLLLKHRQTLQLQPSDRDWVRHQLQRGCVHVFDRHMASTYLRPVLCTLDTTAGEVAARLLQLGHKGGGVVKVLGQGPGAAAAREPAEPPPEAGPRLAPPEPRDSEVPPARSAPGAFGGPPRAPPADLPLPVGGPGGWSRRASPAPSDSSPGEPFVGGPVSSPRAPRPVVSDTESFSLSPSAESVSDRLDPYSSGGGSSSSSEELEADAASAPTGVPGQPRRPGHPAQPLPLPQTASSPQPQQKAPRAIDSPGGAVREGSCEEKAAAAVAPGGLQSTPGRSGVTAEKAPPPPPPPTLYVQLHGETTRRLEAEEKPLQIQNDYLFQLGFGELWRVQEEGMDSEIGCLIRFYAGKPHSTGSSERIQLSGMYNVRKGKMQLPVNRWTRRQVILCGTCLIVSSVKDSLTGKMHVLPLIGGKVEEVKKHQHCLAFSSSGPQSQTYYICFDTFTEYLRWLRQVSKVASQRISSVDLSCCSLEHLPANLFYSQDLTHLNLKQNFLRQNPSLPAARGLNELQRFTKLKSLNLSNNHLGDFPLAVCSIPTLAELNVSCNALRSVPAAVGVMHNLQTFLLDGNFLQSLPAELENMKQLSYLGLSFNEFTDIPEVLEKLTAVDKLCMSGNCVETLRLQALRKMPHIKHVDLRLNVIRKLIADEVDFLQHVTQLDLRDNKLGDLDAMIFNNIEVLHCERNQLVTLDICGYFLKALYASSNELVQLDVYPVPNYLSYMDVSRNRLENVPEWVCESRKLEVLDIGHNQICELPARLFCNSSLRKLLAGHNQLARLPERLERTSVEVLDVQHNQLLELPPNLLMKADSLRFLNASANKLESLPPATLSEETNSILQELYLTNNSLTDKCVPLLTGHPHLKILHMAYNRLQSFPASKMAKLEELEEIDLSGNKLKAIPTTIMNCRRMHTVIAHSNCIEVFPEVMQLPEIKCVDLSCNELSEVTLPENLPPKLQELDLTGNPRLVLDHKTLELLNNIRCFKIDQPSTGDASGAPAVWSHGYTEASGVKNKLCVAALSVNNFCDNREALYGVFDGDRNVEVPYLLQCTMSDILAEELQKTKNEEEYMVNTFIVMQRKLGTAGQKLGGAAVLCHIKHDPVDPGGSFTLTSANVGKCQTVLCRNGKPLPLSRSYIMSCEEELKRIKQHKAIITEDGKVNGVTESTRILGYTFLHPSVVPRPHVQSVLLTPQDEFFILGSKGLWDSLSVEEAVEAVRNVPDALAAAKKLCTLAQSYGCHDSISAVVVQLSVTEDSFCCCELSAGGAVPPPSPGIFPPSVNMVIKDRPSDGLGVPSSSSGMASEISSELSTSEMSSEVGSTASDEPPPGALSENSPAYPSEQRCMLHPICLSNSFQRQLSSATFSSAFSDNGLDSDDEEPIEGVFTNGSRVEVEVDIHCSRAKEKEKQQHLLQVPAEASDEGIVISANEDEPGLPRKADFSAVGTIGRRRANGSVAPQERSHNVIEVATDAPLRKPGGYFAAPAQPDPDDQFIIPPELEEEVKEIMKHHQEQQQQQQPPPPPQLQPQLPRHYQLDQLPDYYDTPL</sequence>
<evidence type="ECO:0000250" key="1"/>
<evidence type="ECO:0000250" key="2">
    <source>
        <dbReference type="UniProtKB" id="P35813"/>
    </source>
</evidence>
<evidence type="ECO:0000250" key="3">
    <source>
        <dbReference type="UniProtKB" id="Q8CHE4"/>
    </source>
</evidence>
<evidence type="ECO:0000250" key="4">
    <source>
        <dbReference type="UniProtKB" id="Q9WTR8"/>
    </source>
</evidence>
<evidence type="ECO:0000255" key="5">
    <source>
        <dbReference type="PROSITE-ProRule" id="PRU00145"/>
    </source>
</evidence>
<evidence type="ECO:0000255" key="6">
    <source>
        <dbReference type="PROSITE-ProRule" id="PRU01082"/>
    </source>
</evidence>
<evidence type="ECO:0000256" key="7">
    <source>
        <dbReference type="SAM" id="MobiDB-lite"/>
    </source>
</evidence>
<evidence type="ECO:0000269" key="8">
    <source>
    </source>
</evidence>
<evidence type="ECO:0000269" key="9">
    <source>
    </source>
</evidence>
<evidence type="ECO:0000269" key="10">
    <source>
    </source>
</evidence>
<evidence type="ECO:0000269" key="11">
    <source>
    </source>
</evidence>
<evidence type="ECO:0000269" key="12">
    <source>
    </source>
</evidence>
<evidence type="ECO:0000269" key="13">
    <source>
    </source>
</evidence>
<evidence type="ECO:0000269" key="14">
    <source>
    </source>
</evidence>
<evidence type="ECO:0000269" key="15">
    <source>
    </source>
</evidence>
<evidence type="ECO:0000269" key="16">
    <source>
    </source>
</evidence>
<evidence type="ECO:0000269" key="17">
    <source>
    </source>
</evidence>
<evidence type="ECO:0000269" key="18">
    <source>
    </source>
</evidence>
<evidence type="ECO:0000269" key="19">
    <source>
    </source>
</evidence>
<evidence type="ECO:0000269" key="20">
    <source>
    </source>
</evidence>
<evidence type="ECO:0000305" key="21"/>
<evidence type="ECO:0007744" key="22">
    <source>
    </source>
</evidence>
<evidence type="ECO:0007744" key="23">
    <source>
    </source>
</evidence>
<gene>
    <name type="primary">PHLPP1</name>
    <name type="synonym">KIAA0606</name>
    <name type="synonym">PHLPP</name>
    <name type="synonym">PLEKHE1</name>
    <name type="synonym">SCOP</name>
</gene>
<name>PHLP1_HUMAN</name>
<feature type="chain" id="PRO_0000057781" description="PH domain leucine-rich repeat-containing protein phosphatase 1">
    <location>
        <begin position="1"/>
        <end position="1717"/>
    </location>
</feature>
<feature type="domain" description="PH" evidence="5">
    <location>
        <begin position="536"/>
        <end position="636"/>
    </location>
</feature>
<feature type="repeat" description="LRR 1">
    <location>
        <begin position="638"/>
        <end position="659"/>
    </location>
</feature>
<feature type="repeat" description="LRR 2">
    <location>
        <begin position="661"/>
        <end position="682"/>
    </location>
</feature>
<feature type="repeat" description="LRR 3">
    <location>
        <begin position="692"/>
        <end position="712"/>
    </location>
</feature>
<feature type="repeat" description="LRR 4">
    <location>
        <begin position="715"/>
        <end position="736"/>
    </location>
</feature>
<feature type="repeat" description="LRR 5">
    <location>
        <begin position="738"/>
        <end position="760"/>
    </location>
</feature>
<feature type="repeat" description="LRR 6">
    <location>
        <begin position="761"/>
        <end position="783"/>
    </location>
</feature>
<feature type="repeat" description="LRR 7">
    <location>
        <begin position="784"/>
        <end position="804"/>
    </location>
</feature>
<feature type="repeat" description="LRR 8">
    <location>
        <begin position="808"/>
        <end position="831"/>
    </location>
</feature>
<feature type="repeat" description="LRR 9">
    <location>
        <begin position="832"/>
        <end position="853"/>
    </location>
</feature>
<feature type="repeat" description="LRR 10">
    <location>
        <begin position="873"/>
        <end position="894"/>
    </location>
</feature>
<feature type="repeat" description="LRR 11">
    <location>
        <begin position="895"/>
        <end position="916"/>
    </location>
</feature>
<feature type="repeat" description="LRR 12">
    <location>
        <begin position="918"/>
        <end position="939"/>
    </location>
</feature>
<feature type="repeat" description="LRR 13">
    <location>
        <begin position="941"/>
        <end position="962"/>
    </location>
</feature>
<feature type="repeat" description="LRR 14">
    <location>
        <begin position="963"/>
        <end position="984"/>
    </location>
</feature>
<feature type="repeat" description="LRR 15">
    <location>
        <begin position="987"/>
        <end position="1008"/>
    </location>
</feature>
<feature type="repeat" description="LRR 16">
    <location>
        <begin position="1013"/>
        <end position="1033"/>
    </location>
</feature>
<feature type="repeat" description="LRR 17">
    <location>
        <begin position="1037"/>
        <end position="1058"/>
    </location>
</feature>
<feature type="repeat" description="LRR 18">
    <location>
        <begin position="1061"/>
        <end position="1082"/>
    </location>
</feature>
<feature type="repeat" description="LRR 19">
    <location>
        <begin position="1084"/>
        <end position="1105"/>
    </location>
</feature>
<feature type="repeat" description="LRR 20">
    <location>
        <begin position="1106"/>
        <end position="1127"/>
    </location>
</feature>
<feature type="repeat" description="LRR 21">
    <location>
        <begin position="1129"/>
        <end position="1150"/>
    </location>
</feature>
<feature type="domain" description="PPM-type phosphatase" evidence="6">
    <location>
        <begin position="1175"/>
        <end position="1422"/>
    </location>
</feature>
<feature type="region of interest" description="Disordered" evidence="7">
    <location>
        <begin position="1"/>
        <end position="25"/>
    </location>
</feature>
<feature type="region of interest" description="Disordered" evidence="7">
    <location>
        <begin position="41"/>
        <end position="118"/>
    </location>
</feature>
<feature type="region of interest" description="Disordered" evidence="7">
    <location>
        <begin position="136"/>
        <end position="156"/>
    </location>
</feature>
<feature type="region of interest" description="Disordered" evidence="7">
    <location>
        <begin position="252"/>
        <end position="470"/>
    </location>
</feature>
<feature type="region of interest" description="Interaction with NHERF1" evidence="15">
    <location>
        <begin position="1076"/>
        <end position="1205"/>
    </location>
</feature>
<feature type="region of interest" description="Disordered" evidence="7">
    <location>
        <begin position="1458"/>
        <end position="1510"/>
    </location>
</feature>
<feature type="region of interest" description="Disordered" evidence="7">
    <location>
        <begin position="1673"/>
        <end position="1717"/>
    </location>
</feature>
<feature type="short sequence motif" description="PDZ-binding; required for interaction with NHERF1" evidence="15">
    <location>
        <begin position="1715"/>
        <end position="1717"/>
    </location>
</feature>
<feature type="compositionally biased region" description="Low complexity" evidence="7">
    <location>
        <begin position="98"/>
        <end position="110"/>
    </location>
</feature>
<feature type="compositionally biased region" description="Pro residues" evidence="7">
    <location>
        <begin position="262"/>
        <end position="274"/>
    </location>
</feature>
<feature type="compositionally biased region" description="Low complexity" evidence="7">
    <location>
        <begin position="313"/>
        <end position="325"/>
    </location>
</feature>
<feature type="compositionally biased region" description="Low complexity" evidence="7">
    <location>
        <begin position="333"/>
        <end position="345"/>
    </location>
</feature>
<feature type="compositionally biased region" description="Polar residues" evidence="7">
    <location>
        <begin position="346"/>
        <end position="358"/>
    </location>
</feature>
<feature type="compositionally biased region" description="Polar residues" evidence="7">
    <location>
        <begin position="408"/>
        <end position="417"/>
    </location>
</feature>
<feature type="compositionally biased region" description="Low complexity" evidence="7">
    <location>
        <begin position="1468"/>
        <end position="1489"/>
    </location>
</feature>
<feature type="binding site" evidence="2">
    <location>
        <position position="1210"/>
    </location>
    <ligand>
        <name>Mn(2+)</name>
        <dbReference type="ChEBI" id="CHEBI:29035"/>
        <label>1</label>
    </ligand>
</feature>
<feature type="binding site" evidence="2">
    <location>
        <position position="1210"/>
    </location>
    <ligand>
        <name>Mn(2+)</name>
        <dbReference type="ChEBI" id="CHEBI:29035"/>
        <label>2</label>
    </ligand>
</feature>
<feature type="binding site" evidence="2">
    <location>
        <position position="1211"/>
    </location>
    <ligand>
        <name>Mn(2+)</name>
        <dbReference type="ChEBI" id="CHEBI:29035"/>
        <label>1</label>
    </ligand>
</feature>
<feature type="binding site" evidence="2">
    <location>
        <position position="1374"/>
    </location>
    <ligand>
        <name>Mn(2+)</name>
        <dbReference type="ChEBI" id="CHEBI:29035"/>
        <label>2</label>
    </ligand>
</feature>
<feature type="binding site" evidence="2">
    <location>
        <position position="1413"/>
    </location>
    <ligand>
        <name>Mn(2+)</name>
        <dbReference type="ChEBI" id="CHEBI:29035"/>
        <label>2</label>
    </ligand>
</feature>
<feature type="modified residue" description="N-acetylmethionine" evidence="22">
    <location>
        <position position="1"/>
    </location>
</feature>
<feature type="modified residue" description="Phosphoserine" evidence="23">
    <location>
        <position position="317"/>
    </location>
</feature>
<feature type="modified residue" description="Phosphoserine" evidence="23">
    <location>
        <position position="412"/>
    </location>
</feature>
<feature type="splice variant" id="VSP_057809" description="In isoform 2.">
    <location>
        <begin position="1"/>
        <end position="512"/>
    </location>
</feature>
<feature type="sequence variant" id="VAR_056725" description="In dbSNP:rs9950585.">
    <original>S</original>
    <variation>T</variation>
    <location>
        <position position="1118"/>
    </location>
</feature>
<feature type="mutagenesis site" description="Loss of function in vivo, but does not abolishes intrinsic phosphatase activity." evidence="8">
    <location>
        <begin position="1715"/>
        <end position="1717"/>
    </location>
</feature>
<feature type="sequence conflict" description="In Ref. 5; BAA91980." evidence="21" ref="5">
    <original>T</original>
    <variation>A</variation>
    <location>
        <position position="691"/>
    </location>
</feature>
<feature type="sequence conflict" description="In Ref. 4; AAH47653." evidence="21" ref="4">
    <original>L</original>
    <variation>F</variation>
    <location>
        <position position="1062"/>
    </location>
</feature>
<feature type="sequence conflict" description="In Ref. 2; BAA25532." evidence="21" ref="2">
    <original>R</original>
    <variation>S</variation>
    <location>
        <position position="1083"/>
    </location>
</feature>
<feature type="sequence conflict" description="In Ref. 5; BAA91980." evidence="21" ref="5">
    <original>D</original>
    <variation>V</variation>
    <location>
        <position position="1227"/>
    </location>
</feature>
<feature type="sequence conflict" description="In Ref. 4; AAH47653." evidence="21" ref="4">
    <original>V</original>
    <variation>M</variation>
    <location>
        <position position="1490"/>
    </location>
</feature>
<feature type="sequence conflict" description="In Ref. 4; AAH63519." evidence="21" ref="4">
    <location>
        <position position="1580"/>
    </location>
</feature>
<organism>
    <name type="scientific">Homo sapiens</name>
    <name type="common">Human</name>
    <dbReference type="NCBI Taxonomy" id="9606"/>
    <lineage>
        <taxon>Eukaryota</taxon>
        <taxon>Metazoa</taxon>
        <taxon>Chordata</taxon>
        <taxon>Craniata</taxon>
        <taxon>Vertebrata</taxon>
        <taxon>Euteleostomi</taxon>
        <taxon>Mammalia</taxon>
        <taxon>Eutheria</taxon>
        <taxon>Euarchontoglires</taxon>
        <taxon>Primates</taxon>
        <taxon>Haplorrhini</taxon>
        <taxon>Catarrhini</taxon>
        <taxon>Hominidae</taxon>
        <taxon>Homo</taxon>
    </lineage>
</organism>
<dbReference type="EC" id="3.1.3.16"/>
<dbReference type="EMBL" id="AC015989">
    <property type="status" value="NOT_ANNOTATED_CDS"/>
    <property type="molecule type" value="Genomic_DNA"/>
</dbReference>
<dbReference type="EMBL" id="AC022046">
    <property type="status" value="NOT_ANNOTATED_CDS"/>
    <property type="molecule type" value="Genomic_DNA"/>
</dbReference>
<dbReference type="EMBL" id="AC027553">
    <property type="status" value="NOT_ANNOTATED_CDS"/>
    <property type="molecule type" value="Genomic_DNA"/>
</dbReference>
<dbReference type="EMBL" id="AB011178">
    <property type="protein sequence ID" value="BAA25532.2"/>
    <property type="molecule type" value="mRNA"/>
</dbReference>
<dbReference type="EMBL" id="BC010706">
    <property type="protein sequence ID" value="AAH10706.1"/>
    <property type="molecule type" value="mRNA"/>
</dbReference>
<dbReference type="EMBL" id="BC014927">
    <property type="protein sequence ID" value="AAH14927.3"/>
    <property type="status" value="ALT_INIT"/>
    <property type="molecule type" value="mRNA"/>
</dbReference>
<dbReference type="EMBL" id="BC047653">
    <property type="protein sequence ID" value="AAH47653.1"/>
    <property type="molecule type" value="mRNA"/>
</dbReference>
<dbReference type="EMBL" id="BC063519">
    <property type="protein sequence ID" value="AAH63519.1"/>
    <property type="molecule type" value="mRNA"/>
</dbReference>
<dbReference type="EMBL" id="BC082244">
    <property type="protein sequence ID" value="AAH82244.1"/>
    <property type="status" value="ALT_SEQ"/>
    <property type="molecule type" value="mRNA"/>
</dbReference>
<dbReference type="EMBL" id="BC126277">
    <property type="protein sequence ID" value="AAI26278.1"/>
    <property type="status" value="ALT_INIT"/>
    <property type="molecule type" value="mRNA"/>
</dbReference>
<dbReference type="EMBL" id="AK001924">
    <property type="protein sequence ID" value="BAA91980.1"/>
    <property type="status" value="ALT_INIT"/>
    <property type="molecule type" value="mRNA"/>
</dbReference>
<dbReference type="CCDS" id="CCDS45881.2">
    <molecule id="O60346-1"/>
</dbReference>
<dbReference type="PIR" id="T00258">
    <property type="entry name" value="T00258"/>
</dbReference>
<dbReference type="RefSeq" id="NP_919431.2">
    <molecule id="O60346-1"/>
    <property type="nucleotide sequence ID" value="NM_194449.4"/>
</dbReference>
<dbReference type="SMR" id="O60346"/>
<dbReference type="BioGRID" id="116843">
    <property type="interactions" value="311"/>
</dbReference>
<dbReference type="CORUM" id="O60346"/>
<dbReference type="FunCoup" id="O60346">
    <property type="interactions" value="2473"/>
</dbReference>
<dbReference type="IntAct" id="O60346">
    <property type="interactions" value="52"/>
</dbReference>
<dbReference type="MINT" id="O60346"/>
<dbReference type="STRING" id="9606.ENSP00000262719"/>
<dbReference type="BindingDB" id="O60346"/>
<dbReference type="ChEMBL" id="CHEMBL3414405"/>
<dbReference type="DEPOD" id="PHLPP1"/>
<dbReference type="GlyCosmos" id="O60346">
    <property type="glycosylation" value="1 site, 1 glycan"/>
</dbReference>
<dbReference type="GlyGen" id="O60346">
    <property type="glycosylation" value="4 sites, 2 O-linked glycans (3 sites)"/>
</dbReference>
<dbReference type="iPTMnet" id="O60346"/>
<dbReference type="PhosphoSitePlus" id="O60346"/>
<dbReference type="BioMuta" id="PHLPP1"/>
<dbReference type="jPOST" id="O60346"/>
<dbReference type="MassIVE" id="O60346"/>
<dbReference type="PaxDb" id="9606-ENSP00000262719"/>
<dbReference type="PeptideAtlas" id="O60346"/>
<dbReference type="ProteomicsDB" id="49376"/>
<dbReference type="Pumba" id="O60346"/>
<dbReference type="Antibodypedia" id="23071">
    <property type="antibodies" value="178 antibodies from 34 providers"/>
</dbReference>
<dbReference type="DNASU" id="23239"/>
<dbReference type="Ensembl" id="ENST00000262719.10">
    <molecule id="O60346-1"/>
    <property type="protein sequence ID" value="ENSP00000262719.4"/>
    <property type="gene ID" value="ENSG00000081913.14"/>
</dbReference>
<dbReference type="GeneID" id="23239"/>
<dbReference type="KEGG" id="hsa:23239"/>
<dbReference type="MANE-Select" id="ENST00000262719.10">
    <property type="protein sequence ID" value="ENSP00000262719.4"/>
    <property type="RefSeq nucleotide sequence ID" value="NM_194449.4"/>
    <property type="RefSeq protein sequence ID" value="NP_919431.2"/>
</dbReference>
<dbReference type="UCSC" id="uc021ule.2">
    <molecule id="O60346-1"/>
    <property type="organism name" value="human"/>
</dbReference>
<dbReference type="AGR" id="HGNC:20610"/>
<dbReference type="CTD" id="23239"/>
<dbReference type="DisGeNET" id="23239"/>
<dbReference type="GeneCards" id="PHLPP1"/>
<dbReference type="HGNC" id="HGNC:20610">
    <property type="gene designation" value="PHLPP1"/>
</dbReference>
<dbReference type="HPA" id="ENSG00000081913">
    <property type="expression patterns" value="Tissue enhanced (brain)"/>
</dbReference>
<dbReference type="MalaCards" id="PHLPP1"/>
<dbReference type="MIM" id="609396">
    <property type="type" value="gene"/>
</dbReference>
<dbReference type="neXtProt" id="NX_O60346"/>
<dbReference type="OpenTargets" id="ENSG00000081913"/>
<dbReference type="PharmGKB" id="PA165429055"/>
<dbReference type="VEuPathDB" id="HostDB:ENSG00000081913"/>
<dbReference type="eggNOG" id="KOG0618">
    <property type="taxonomic scope" value="Eukaryota"/>
</dbReference>
<dbReference type="GeneTree" id="ENSGT00940000158137"/>
<dbReference type="HOGENOM" id="CLU_003020_0_0_1"/>
<dbReference type="InParanoid" id="O60346"/>
<dbReference type="OMA" id="GHNQICD"/>
<dbReference type="OrthoDB" id="1394818at2759"/>
<dbReference type="PAN-GO" id="O60346">
    <property type="GO annotations" value="4 GO annotations based on evolutionary models"/>
</dbReference>
<dbReference type="PhylomeDB" id="O60346"/>
<dbReference type="TreeFam" id="TF315993"/>
<dbReference type="PathwayCommons" id="O60346"/>
<dbReference type="Reactome" id="R-HSA-199418">
    <property type="pathway name" value="Negative regulation of the PI3K/AKT network"/>
</dbReference>
<dbReference type="SABIO-RK" id="O60346"/>
<dbReference type="SignaLink" id="O60346"/>
<dbReference type="SIGNOR" id="O60346"/>
<dbReference type="BioGRID-ORCS" id="23239">
    <property type="hits" value="7 hits in 1180 CRISPR screens"/>
</dbReference>
<dbReference type="ChiTaRS" id="PHLPP1">
    <property type="organism name" value="human"/>
</dbReference>
<dbReference type="GeneWiki" id="PHLPP_(gene)"/>
<dbReference type="GenomeRNAi" id="23239"/>
<dbReference type="Pharos" id="O60346">
    <property type="development level" value="Tchem"/>
</dbReference>
<dbReference type="PRO" id="PR:O60346"/>
<dbReference type="Proteomes" id="UP000005640">
    <property type="component" value="Chromosome 18"/>
</dbReference>
<dbReference type="RNAct" id="O60346">
    <property type="molecule type" value="protein"/>
</dbReference>
<dbReference type="Bgee" id="ENSG00000081913">
    <property type="expression patterns" value="Expressed in corpus callosum and 189 other cell types or tissues"/>
</dbReference>
<dbReference type="ExpressionAtlas" id="O60346">
    <property type="expression patterns" value="baseline and differential"/>
</dbReference>
<dbReference type="GO" id="GO:0005737">
    <property type="term" value="C:cytoplasm"/>
    <property type="evidence" value="ECO:0000318"/>
    <property type="project" value="GO_Central"/>
</dbReference>
<dbReference type="GO" id="GO:0005829">
    <property type="term" value="C:cytosol"/>
    <property type="evidence" value="ECO:0000304"/>
    <property type="project" value="Reactome"/>
</dbReference>
<dbReference type="GO" id="GO:0005634">
    <property type="term" value="C:nucleus"/>
    <property type="evidence" value="ECO:0007669"/>
    <property type="project" value="UniProtKB-SubCell"/>
</dbReference>
<dbReference type="GO" id="GO:0005886">
    <property type="term" value="C:plasma membrane"/>
    <property type="evidence" value="ECO:0007669"/>
    <property type="project" value="UniProtKB-SubCell"/>
</dbReference>
<dbReference type="GO" id="GO:0046872">
    <property type="term" value="F:metal ion binding"/>
    <property type="evidence" value="ECO:0007669"/>
    <property type="project" value="UniProtKB-KW"/>
</dbReference>
<dbReference type="GO" id="GO:0004722">
    <property type="term" value="F:protein serine/threonine phosphatase activity"/>
    <property type="evidence" value="ECO:0000314"/>
    <property type="project" value="UniProt"/>
</dbReference>
<dbReference type="GO" id="GO:0006915">
    <property type="term" value="P:apoptotic process"/>
    <property type="evidence" value="ECO:0007669"/>
    <property type="project" value="UniProtKB-KW"/>
</dbReference>
<dbReference type="GO" id="GO:0009649">
    <property type="term" value="P:entrainment of circadian clock"/>
    <property type="evidence" value="ECO:0007669"/>
    <property type="project" value="Ensembl"/>
</dbReference>
<dbReference type="GO" id="GO:0035556">
    <property type="term" value="P:intracellular signal transduction"/>
    <property type="evidence" value="ECO:0000318"/>
    <property type="project" value="GO_Central"/>
</dbReference>
<dbReference type="GO" id="GO:0051898">
    <property type="term" value="P:negative regulation of phosphatidylinositol 3-kinase/protein kinase B signal transduction"/>
    <property type="evidence" value="ECO:0000315"/>
    <property type="project" value="UniProtKB"/>
</dbReference>
<dbReference type="GO" id="GO:0042981">
    <property type="term" value="P:regulation of apoptotic process"/>
    <property type="evidence" value="ECO:0000314"/>
    <property type="project" value="UniProtKB"/>
</dbReference>
<dbReference type="GO" id="GO:0046328">
    <property type="term" value="P:regulation of JNK cascade"/>
    <property type="evidence" value="ECO:0000314"/>
    <property type="project" value="UniProtKB"/>
</dbReference>
<dbReference type="GO" id="GO:0043408">
    <property type="term" value="P:regulation of MAPK cascade"/>
    <property type="evidence" value="ECO:0000315"/>
    <property type="project" value="UniProtKB"/>
</dbReference>
<dbReference type="GO" id="GO:1900744">
    <property type="term" value="P:regulation of p38MAPK cascade"/>
    <property type="evidence" value="ECO:0000314"/>
    <property type="project" value="UniProtKB"/>
</dbReference>
<dbReference type="GO" id="GO:0002667">
    <property type="term" value="P:regulation of T cell anergy"/>
    <property type="evidence" value="ECO:0007669"/>
    <property type="project" value="Ensembl"/>
</dbReference>
<dbReference type="CDD" id="cd13322">
    <property type="entry name" value="PH_PHLPP-like"/>
    <property type="match status" value="1"/>
</dbReference>
<dbReference type="CDD" id="cd00143">
    <property type="entry name" value="PP2Cc"/>
    <property type="match status" value="1"/>
</dbReference>
<dbReference type="CDD" id="cd17240">
    <property type="entry name" value="RA_PHLPP1"/>
    <property type="match status" value="1"/>
</dbReference>
<dbReference type="FunFam" id="3.80.10.10:FF:000278">
    <property type="entry name" value="PH domain and leucine rich repeat protein phosphatase 1"/>
    <property type="match status" value="1"/>
</dbReference>
<dbReference type="FunFam" id="3.80.10.10:FF:000345">
    <property type="entry name" value="PH domain and leucine rich repeat protein phosphatase 1"/>
    <property type="match status" value="1"/>
</dbReference>
<dbReference type="FunFam" id="3.80.10.10:FF:000027">
    <property type="entry name" value="PH domain and leucine rich repeat protein phosphatase 2"/>
    <property type="match status" value="1"/>
</dbReference>
<dbReference type="FunFam" id="3.60.40.10:FF:000003">
    <property type="entry name" value="PH domain and leucine-rich repeat protein phosphatase 1"/>
    <property type="match status" value="1"/>
</dbReference>
<dbReference type="Gene3D" id="2.30.29.30">
    <property type="entry name" value="Pleckstrin-homology domain (PH domain)/Phosphotyrosine-binding domain (PTB)"/>
    <property type="match status" value="1"/>
</dbReference>
<dbReference type="Gene3D" id="3.60.40.10">
    <property type="entry name" value="PPM-type phosphatase domain"/>
    <property type="match status" value="1"/>
</dbReference>
<dbReference type="Gene3D" id="3.80.10.10">
    <property type="entry name" value="Ribonuclease Inhibitor"/>
    <property type="match status" value="4"/>
</dbReference>
<dbReference type="InterPro" id="IPR001611">
    <property type="entry name" value="Leu-rich_rpt"/>
</dbReference>
<dbReference type="InterPro" id="IPR003591">
    <property type="entry name" value="Leu-rich_rpt_typical-subtyp"/>
</dbReference>
<dbReference type="InterPro" id="IPR032675">
    <property type="entry name" value="LRR_dom_sf"/>
</dbReference>
<dbReference type="InterPro" id="IPR050216">
    <property type="entry name" value="LRR_domain-containing"/>
</dbReference>
<dbReference type="InterPro" id="IPR011993">
    <property type="entry name" value="PH-like_dom_sf"/>
</dbReference>
<dbReference type="InterPro" id="IPR001849">
    <property type="entry name" value="PH_domain"/>
</dbReference>
<dbReference type="InterPro" id="IPR036457">
    <property type="entry name" value="PPM-type-like_dom_sf"/>
</dbReference>
<dbReference type="InterPro" id="IPR001932">
    <property type="entry name" value="PPM-type_phosphatase-like_dom"/>
</dbReference>
<dbReference type="InterPro" id="IPR055071">
    <property type="entry name" value="RA_PHLPP-like"/>
</dbReference>
<dbReference type="PANTHER" id="PTHR48051">
    <property type="match status" value="1"/>
</dbReference>
<dbReference type="PANTHER" id="PTHR48051:SF54">
    <property type="entry name" value="LEUCINE-RICH REPEAT-CONTAINING PROTEIN"/>
    <property type="match status" value="1"/>
</dbReference>
<dbReference type="Pfam" id="PF13516">
    <property type="entry name" value="LRR_6"/>
    <property type="match status" value="2"/>
</dbReference>
<dbReference type="Pfam" id="PF13855">
    <property type="entry name" value="LRR_8"/>
    <property type="match status" value="2"/>
</dbReference>
<dbReference type="Pfam" id="PF00169">
    <property type="entry name" value="PH"/>
    <property type="match status" value="1"/>
</dbReference>
<dbReference type="Pfam" id="PF00481">
    <property type="entry name" value="PP2C"/>
    <property type="match status" value="1"/>
</dbReference>
<dbReference type="Pfam" id="PF23010">
    <property type="entry name" value="RA_3"/>
    <property type="match status" value="1"/>
</dbReference>
<dbReference type="SMART" id="SM00364">
    <property type="entry name" value="LRR_BAC"/>
    <property type="match status" value="10"/>
</dbReference>
<dbReference type="SMART" id="SM00369">
    <property type="entry name" value="LRR_TYP"/>
    <property type="match status" value="10"/>
</dbReference>
<dbReference type="SMART" id="SM00332">
    <property type="entry name" value="PP2Cc"/>
    <property type="match status" value="1"/>
</dbReference>
<dbReference type="SUPFAM" id="SSF52058">
    <property type="entry name" value="L domain-like"/>
    <property type="match status" value="2"/>
</dbReference>
<dbReference type="SUPFAM" id="SSF50729">
    <property type="entry name" value="PH domain-like"/>
    <property type="match status" value="1"/>
</dbReference>
<dbReference type="SUPFAM" id="SSF81606">
    <property type="entry name" value="PP2C-like"/>
    <property type="match status" value="1"/>
</dbReference>
<dbReference type="PROSITE" id="PS51450">
    <property type="entry name" value="LRR"/>
    <property type="match status" value="17"/>
</dbReference>
<dbReference type="PROSITE" id="PS50003">
    <property type="entry name" value="PH_DOMAIN"/>
    <property type="match status" value="1"/>
</dbReference>
<dbReference type="PROSITE" id="PS51746">
    <property type="entry name" value="PPM_2"/>
    <property type="match status" value="1"/>
</dbReference>
<keyword id="KW-0007">Acetylation</keyword>
<keyword id="KW-0025">Alternative splicing</keyword>
<keyword id="KW-0053">Apoptosis</keyword>
<keyword id="KW-1003">Cell membrane</keyword>
<keyword id="KW-0963">Cytoplasm</keyword>
<keyword id="KW-0378">Hydrolase</keyword>
<keyword id="KW-0433">Leucine-rich repeat</keyword>
<keyword id="KW-0464">Manganese</keyword>
<keyword id="KW-0472">Membrane</keyword>
<keyword id="KW-0479">Metal-binding</keyword>
<keyword id="KW-0539">Nucleus</keyword>
<keyword id="KW-0597">Phosphoprotein</keyword>
<keyword id="KW-0904">Protein phosphatase</keyword>
<keyword id="KW-1267">Proteomics identification</keyword>
<keyword id="KW-1185">Reference proteome</keyword>
<keyword id="KW-0677">Repeat</keyword>
<keyword id="KW-0043">Tumor suppressor</keyword>
<comment type="function">
    <text evidence="3 4 8 9 10 11 16 18">Protein phosphatase involved in regulation of Akt and PKC signaling. Mediates dephosphorylation in the C-terminal domain hydrophobic motif of members of the AGC Ser/Thr protein kinase family; specifically acts on 'Ser-473' of AKT2 and AKT3, 'Ser-660' of PRKCB and 'Ser-657' of PRKCA (PubMed:15808505, PubMed:17386267, PubMed:18162466). Isoform 2 seems to have a major role in regulating Akt signaling in hippocampal neurons (By similarity). Akt regulates the balance between cell survival and apoptosis through a cascade that primarily alters the function of transcription factors that regulate pro- and antiapoptotic genes. Dephosphorylation of 'Ser-473' of Akt triggers apoptosis and suppression of tumor growth. Dephosphorylation of PRKCA and PRKCB leads to their destabilization and degradation (PubMed:18162466). Dephosphorylates STK4 on 'Thr-387' leading to STK4 activation and apoptosis (PubMed:20513427). Dephosphorylates RPS6KB1 and is involved in regulation of cap-dependent translation (PubMed:21986499). Inhibits cancer cell proliferation and may act as a tumor suppressor (PubMed:19079341). Dephosphorylates RAF1 inhibiting its kinase activity (PubMed:24530606). May act as a negative regulator of K-Ras signaling in membrane rafts (By similarity). Involved in the hippocampus-dependent long-term memory formation (By similarity). Involved in circadian control by regulating the consolidation of circadian periodicity after resetting (By similarity). Involved in development and function of regulatory T-cells (By similarity).</text>
</comment>
<comment type="catalytic activity">
    <reaction evidence="8 19">
        <text>O-phospho-L-seryl-[protein] + H2O = L-seryl-[protein] + phosphate</text>
        <dbReference type="Rhea" id="RHEA:20629"/>
        <dbReference type="Rhea" id="RHEA-COMP:9863"/>
        <dbReference type="Rhea" id="RHEA-COMP:11604"/>
        <dbReference type="ChEBI" id="CHEBI:15377"/>
        <dbReference type="ChEBI" id="CHEBI:29999"/>
        <dbReference type="ChEBI" id="CHEBI:43474"/>
        <dbReference type="ChEBI" id="CHEBI:83421"/>
        <dbReference type="EC" id="3.1.3.16"/>
    </reaction>
</comment>
<comment type="catalytic activity">
    <reaction evidence="8 19">
        <text>O-phospho-L-threonyl-[protein] + H2O = L-threonyl-[protein] + phosphate</text>
        <dbReference type="Rhea" id="RHEA:47004"/>
        <dbReference type="Rhea" id="RHEA-COMP:11060"/>
        <dbReference type="Rhea" id="RHEA-COMP:11605"/>
        <dbReference type="ChEBI" id="CHEBI:15377"/>
        <dbReference type="ChEBI" id="CHEBI:30013"/>
        <dbReference type="ChEBI" id="CHEBI:43474"/>
        <dbReference type="ChEBI" id="CHEBI:61977"/>
        <dbReference type="EC" id="3.1.3.16"/>
    </reaction>
</comment>
<comment type="cofactor">
    <cofactor evidence="1">
        <name>Mn(2+)</name>
        <dbReference type="ChEBI" id="CHEBI:29035"/>
    </cofactor>
    <text evidence="1 19">Binds 2 manganese ions per subunit (By similarity). Mn(2+) is inhibitory below pH 8 and activating above pH 8 (PubMed:24892992).</text>
</comment>
<comment type="activity regulation">
    <text evidence="8 17">Insensitive to okadaic acid (PubMed:15808505). Deubiquitination by WDR48-USP12 complex positively regulates PHLPP1 stability (PubMed:24145035).</text>
</comment>
<comment type="biophysicochemical properties">
    <kinetics>
        <KM evidence="19">1.5 mM for p-nitrophenyl phosphate</KM>
    </kinetics>
</comment>
<comment type="subunit">
    <text evidence="4 9 10 12 13 14 15 16 17 18 20">Interacts with the nucleotide free form of K-Ras (KRAS) via its LRR repeats (By similarity). Interacts with AKT2, AKT3, PRKCB isoform beta-II, STK4, RPS6KB1, RAF1 (PubMed:17386267, PubMed:18162466, PubMed:19732725, PubMed:21986499, PubMed:24530606). Isoform 1 (predominantly) and isoform 2 interact with BRAP (PubMed:25820252). Interacts with FKBP5; FKBP5 acts as a scaffold for PHLPP1 and Akt (PubMed:19732725). Interacts with SCRIB; SCRIB acts as a scaffold for PHLPP1 and Akt (PubMed:21701506). Interacts with NHERF1; NHERF1 scaffolds a heterotrimeric complex with PTEN at the plasma membrane (PubMed:21804599). Interacts with WDR48 and USP12 (PubMed:24145035).</text>
</comment>
<comment type="interaction">
    <interactant intactId="EBI-2511516">
        <id>O60346</id>
    </interactant>
    <interactant intactId="EBI-349787">
        <id>O14745</id>
        <label>NHERF1</label>
    </interactant>
    <organismsDiffer>false</organismsDiffer>
    <experiments>2</experiments>
</comment>
<comment type="interaction">
    <interactant intactId="EBI-2511516">
        <id>O60346</id>
    </interactant>
    <interactant intactId="EBI-5774511">
        <id>P05771-2</id>
        <label>PRKCB</label>
    </interactant>
    <organismsDiffer>false</organismsDiffer>
    <experiments>5</experiments>
</comment>
<comment type="interaction">
    <interactant intactId="EBI-2511516">
        <id>O60346</id>
    </interactant>
    <interactant intactId="EBI-357345">
        <id>Q14160</id>
        <label>SCRIB</label>
    </interactant>
    <organismsDiffer>false</organismsDiffer>
    <experiments>4</experiments>
</comment>
<comment type="interaction">
    <interactant intactId="EBI-2511516">
        <id>O60346</id>
    </interactant>
    <interactant intactId="EBI-1766028">
        <id>Q80U72</id>
        <label>Scrib</label>
    </interactant>
    <organismsDiffer>true</organismsDiffer>
    <experiments>2</experiments>
</comment>
<comment type="interaction">
    <interactant intactId="EBI-11165225">
        <id>O60346-2</id>
    </interactant>
    <interactant intactId="EBI-349787">
        <id>O14745</id>
        <label>NHERF1</label>
    </interactant>
    <organismsDiffer>false</organismsDiffer>
    <experiments>5</experiments>
</comment>
<comment type="subcellular location">
    <subcellularLocation>
        <location>Cytoplasm</location>
    </subcellularLocation>
    <subcellularLocation>
        <location>Membrane</location>
        <topology>Peripheral membrane protein</topology>
    </subcellularLocation>
    <subcellularLocation>
        <location>Nucleus</location>
    </subcellularLocation>
    <text>In colorectal cancer tissue, expression is concentrated at the lateral membrane of epithelial cells.</text>
</comment>
<comment type="subcellular location">
    <molecule>Isoform 2</molecule>
    <subcellularLocation>
        <location evidence="15">Cell membrane</location>
    </subcellularLocation>
</comment>
<comment type="alternative products">
    <event type="alternative splicing"/>
    <isoform>
        <id>O60346-1</id>
        <name>1</name>
        <name>beta</name>
        <sequence type="displayed"/>
    </isoform>
    <isoform>
        <id>O60346-2</id>
        <name>2</name>
        <name>alpha</name>
        <sequence type="described" ref="VSP_057809"/>
    </isoform>
</comment>
<comment type="tissue specificity">
    <text evidence="8 11">In colorectal cancer tissue, expression is highest in the surface epithelium of normal colonic mucosa adjacent to the cancer tissue but is largely excluded from the crypt bases. Expression is lost or significantly decreased in 78% of tested tumors (at protein level). Ubiquitously expressed in non-cancerous tissues.</text>
</comment>
<comment type="domain">
    <text>The PH domain is required for interaction with PRKCB and its dephosphorylation.</text>
</comment>
<comment type="sequence caution" evidence="21">
    <conflict type="erroneous initiation">
        <sequence resource="EMBL-CDS" id="AAH14927"/>
    </conflict>
    <text>Truncated N-terminus.</text>
</comment>
<comment type="sequence caution" evidence="21">
    <conflict type="miscellaneous discrepancy">
        <sequence resource="EMBL-CDS" id="AAH82244"/>
    </conflict>
    <text>Contaminating sequence. Potential poly-A sequence.</text>
</comment>
<comment type="sequence caution" evidence="21">
    <conflict type="erroneous initiation">
        <sequence resource="EMBL-CDS" id="AAI26278"/>
    </conflict>
    <text>Truncated N-terminus.</text>
</comment>
<comment type="sequence caution" evidence="21">
    <conflict type="erroneous initiation">
        <sequence resource="EMBL-CDS" id="BAA91980"/>
    </conflict>
    <text>Truncated N-terminus.</text>
</comment>
<comment type="online information" name="Atlas of Genetics and Cytogenetics in Oncology and Haematology">
    <link uri="https://atlasgeneticsoncology.org/gene/44544/PHLPP1"/>
</comment>
<reference key="1">
    <citation type="journal article" date="2005" name="Nature">
        <title>DNA sequence and analysis of human chromosome 18.</title>
        <authorList>
            <person name="Nusbaum C."/>
            <person name="Zody M.C."/>
            <person name="Borowsky M.L."/>
            <person name="Kamal M."/>
            <person name="Kodira C.D."/>
            <person name="Taylor T.D."/>
            <person name="Whittaker C.A."/>
            <person name="Chang J.L."/>
            <person name="Cuomo C.A."/>
            <person name="Dewar K."/>
            <person name="FitzGerald M.G."/>
            <person name="Yang X."/>
            <person name="Abouelleil A."/>
            <person name="Allen N.R."/>
            <person name="Anderson S."/>
            <person name="Bloom T."/>
            <person name="Bugalter B."/>
            <person name="Butler J."/>
            <person name="Cook A."/>
            <person name="DeCaprio D."/>
            <person name="Engels R."/>
            <person name="Garber M."/>
            <person name="Gnirke A."/>
            <person name="Hafez N."/>
            <person name="Hall J.L."/>
            <person name="Norman C.H."/>
            <person name="Itoh T."/>
            <person name="Jaffe D.B."/>
            <person name="Kuroki Y."/>
            <person name="Lehoczky J."/>
            <person name="Lui A."/>
            <person name="Macdonald P."/>
            <person name="Mauceli E."/>
            <person name="Mikkelsen T.S."/>
            <person name="Naylor J.W."/>
            <person name="Nicol R."/>
            <person name="Nguyen C."/>
            <person name="Noguchi H."/>
            <person name="O'Leary S.B."/>
            <person name="Piqani B."/>
            <person name="Smith C.L."/>
            <person name="Talamas J.A."/>
            <person name="Topham K."/>
            <person name="Totoki Y."/>
            <person name="Toyoda A."/>
            <person name="Wain H.M."/>
            <person name="Young S.K."/>
            <person name="Zeng Q."/>
            <person name="Zimmer A.R."/>
            <person name="Fujiyama A."/>
            <person name="Hattori M."/>
            <person name="Birren B.W."/>
            <person name="Sakaki Y."/>
            <person name="Lander E.S."/>
        </authorList>
    </citation>
    <scope>NUCLEOTIDE SEQUENCE [LARGE SCALE GENOMIC DNA]</scope>
</reference>
<reference key="2">
    <citation type="journal article" date="1998" name="DNA Res.">
        <title>Prediction of the coding sequences of unidentified human genes. IX. The complete sequences of 100 new cDNA clones from brain which can code for large proteins in vitro.</title>
        <authorList>
            <person name="Nagase T."/>
            <person name="Ishikawa K."/>
            <person name="Miyajima N."/>
            <person name="Tanaka A."/>
            <person name="Kotani H."/>
            <person name="Nomura N."/>
            <person name="Ohara O."/>
        </authorList>
    </citation>
    <scope>NUCLEOTIDE SEQUENCE [LARGE SCALE MRNA] OF 349-1717</scope>
    <source>
        <tissue>Brain</tissue>
    </source>
</reference>
<reference key="3">
    <citation type="journal article" date="2002" name="DNA Res.">
        <title>Construction of expression-ready cDNA clones for KIAA genes: manual curation of 330 KIAA cDNA clones.</title>
        <authorList>
            <person name="Nakajima D."/>
            <person name="Okazaki N."/>
            <person name="Yamakawa H."/>
            <person name="Kikuno R."/>
            <person name="Ohara O."/>
            <person name="Nagase T."/>
        </authorList>
    </citation>
    <scope>SEQUENCE REVISION</scope>
</reference>
<reference key="4">
    <citation type="journal article" date="2004" name="Genome Res.">
        <title>The status, quality, and expansion of the NIH full-length cDNA project: the Mammalian Gene Collection (MGC).</title>
        <authorList>
            <consortium name="The MGC Project Team"/>
        </authorList>
    </citation>
    <scope>NUCLEOTIDE SEQUENCE [LARGE SCALE MRNA] OF 475-1717</scope>
    <source>
        <tissue>Cerebellum</tissue>
        <tissue>Hippocampus</tissue>
        <tissue>Lymphoma</tissue>
        <tissue>Melanoma</tissue>
        <tissue>Retinoblastoma</tissue>
    </source>
</reference>
<reference key="5">
    <citation type="journal article" date="2004" name="Nat. Genet.">
        <title>Complete sequencing and characterization of 21,243 full-length human cDNAs.</title>
        <authorList>
            <person name="Ota T."/>
            <person name="Suzuki Y."/>
            <person name="Nishikawa T."/>
            <person name="Otsuki T."/>
            <person name="Sugiyama T."/>
            <person name="Irie R."/>
            <person name="Wakamatsu A."/>
            <person name="Hayashi K."/>
            <person name="Sato H."/>
            <person name="Nagai K."/>
            <person name="Kimura K."/>
            <person name="Makita H."/>
            <person name="Sekine M."/>
            <person name="Obayashi M."/>
            <person name="Nishi T."/>
            <person name="Shibahara T."/>
            <person name="Tanaka T."/>
            <person name="Ishii S."/>
            <person name="Yamamoto J."/>
            <person name="Saito K."/>
            <person name="Kawai Y."/>
            <person name="Isono Y."/>
            <person name="Nakamura Y."/>
            <person name="Nagahari K."/>
            <person name="Murakami K."/>
            <person name="Yasuda T."/>
            <person name="Iwayanagi T."/>
            <person name="Wagatsuma M."/>
            <person name="Shiratori A."/>
            <person name="Sudo H."/>
            <person name="Hosoiri T."/>
            <person name="Kaku Y."/>
            <person name="Kodaira H."/>
            <person name="Kondo H."/>
            <person name="Sugawara M."/>
            <person name="Takahashi M."/>
            <person name="Kanda K."/>
            <person name="Yokoi T."/>
            <person name="Furuya T."/>
            <person name="Kikkawa E."/>
            <person name="Omura Y."/>
            <person name="Abe K."/>
            <person name="Kamihara K."/>
            <person name="Katsuta N."/>
            <person name="Sato K."/>
            <person name="Tanikawa M."/>
            <person name="Yamazaki M."/>
            <person name="Ninomiya K."/>
            <person name="Ishibashi T."/>
            <person name="Yamashita H."/>
            <person name="Murakawa K."/>
            <person name="Fujimori K."/>
            <person name="Tanai H."/>
            <person name="Kimata M."/>
            <person name="Watanabe M."/>
            <person name="Hiraoka S."/>
            <person name="Chiba Y."/>
            <person name="Ishida S."/>
            <person name="Ono Y."/>
            <person name="Takiguchi S."/>
            <person name="Watanabe S."/>
            <person name="Yosida M."/>
            <person name="Hotuta T."/>
            <person name="Kusano J."/>
            <person name="Kanehori K."/>
            <person name="Takahashi-Fujii A."/>
            <person name="Hara H."/>
            <person name="Tanase T.-O."/>
            <person name="Nomura Y."/>
            <person name="Togiya S."/>
            <person name="Komai F."/>
            <person name="Hara R."/>
            <person name="Takeuchi K."/>
            <person name="Arita M."/>
            <person name="Imose N."/>
            <person name="Musashino K."/>
            <person name="Yuuki H."/>
            <person name="Oshima A."/>
            <person name="Sasaki N."/>
            <person name="Aotsuka S."/>
            <person name="Yoshikawa Y."/>
            <person name="Matsunawa H."/>
            <person name="Ichihara T."/>
            <person name="Shiohata N."/>
            <person name="Sano S."/>
            <person name="Moriya S."/>
            <person name="Momiyama H."/>
            <person name="Satoh N."/>
            <person name="Takami S."/>
            <person name="Terashima Y."/>
            <person name="Suzuki O."/>
            <person name="Nakagawa S."/>
            <person name="Senoh A."/>
            <person name="Mizoguchi H."/>
            <person name="Goto Y."/>
            <person name="Shimizu F."/>
            <person name="Wakebe H."/>
            <person name="Hishigaki H."/>
            <person name="Watanabe T."/>
            <person name="Sugiyama A."/>
            <person name="Takemoto M."/>
            <person name="Kawakami B."/>
            <person name="Yamazaki M."/>
            <person name="Watanabe K."/>
            <person name="Kumagai A."/>
            <person name="Itakura S."/>
            <person name="Fukuzumi Y."/>
            <person name="Fujimori Y."/>
            <person name="Komiyama M."/>
            <person name="Tashiro H."/>
            <person name="Tanigami A."/>
            <person name="Fujiwara T."/>
            <person name="Ono T."/>
            <person name="Yamada K."/>
            <person name="Fujii Y."/>
            <person name="Ozaki K."/>
            <person name="Hirao M."/>
            <person name="Ohmori Y."/>
            <person name="Kawabata A."/>
            <person name="Hikiji T."/>
            <person name="Kobatake N."/>
            <person name="Inagaki H."/>
            <person name="Ikema Y."/>
            <person name="Okamoto S."/>
            <person name="Okitani R."/>
            <person name="Kawakami T."/>
            <person name="Noguchi S."/>
            <person name="Itoh T."/>
            <person name="Shigeta K."/>
            <person name="Senba T."/>
            <person name="Matsumura K."/>
            <person name="Nakajima Y."/>
            <person name="Mizuno T."/>
            <person name="Morinaga M."/>
            <person name="Sasaki M."/>
            <person name="Togashi T."/>
            <person name="Oyama M."/>
            <person name="Hata H."/>
            <person name="Watanabe M."/>
            <person name="Komatsu T."/>
            <person name="Mizushima-Sugano J."/>
            <person name="Satoh T."/>
            <person name="Shirai Y."/>
            <person name="Takahashi Y."/>
            <person name="Nakagawa K."/>
            <person name="Okumura K."/>
            <person name="Nagase T."/>
            <person name="Nomura N."/>
            <person name="Kikuchi H."/>
            <person name="Masuho Y."/>
            <person name="Yamashita R."/>
            <person name="Nakai K."/>
            <person name="Yada T."/>
            <person name="Nakamura Y."/>
            <person name="Ohara O."/>
            <person name="Isogai T."/>
            <person name="Sugano S."/>
        </authorList>
    </citation>
    <scope>NUCLEOTIDE SEQUENCE [LARGE SCALE MRNA] OF 495-1233</scope>
    <source>
        <tissue>Placenta</tissue>
    </source>
</reference>
<reference key="6">
    <citation type="journal article" date="2005" name="Mol. Cell">
        <title>PHLPP: a phosphatase that directly dephosphorylates Akt, promotes apoptosis, and suppresses tumor growth.</title>
        <authorList>
            <person name="Gao T."/>
            <person name="Furnari F."/>
            <person name="Newton A.C."/>
        </authorList>
    </citation>
    <scope>FUNCTION</scope>
    <scope>ENZYME ACTIVITY</scope>
    <scope>COFACTOR</scope>
    <scope>ACTIVITY REGULATION</scope>
    <scope>TISSUE SPECIFICITY</scope>
    <scope>MUTAGENESIS OF 1715-THR--LEU-1717</scope>
</reference>
<reference key="7">
    <citation type="journal article" date="2006" name="Cell">
        <title>Global, in vivo, and site-specific phosphorylation dynamics in signaling networks.</title>
        <authorList>
            <person name="Olsen J.V."/>
            <person name="Blagoev B."/>
            <person name="Gnad F."/>
            <person name="Macek B."/>
            <person name="Kumar C."/>
            <person name="Mortensen P."/>
            <person name="Mann M."/>
        </authorList>
    </citation>
    <scope>IDENTIFICATION BY MASS SPECTROMETRY [LARGE SCALE ANALYSIS]</scope>
    <source>
        <tissue>Cervix carcinoma</tissue>
    </source>
</reference>
<reference key="8">
    <citation type="journal article" date="2007" name="Mol. Cell">
        <title>PHLPP and a second isoform, PHLPP2, differentially attenuate the amplitude of Akt signaling by regulating distinct Akt isoforms.</title>
        <authorList>
            <person name="Brognard J."/>
            <person name="Sierecki E."/>
            <person name="Gao T."/>
            <person name="Newton A.C."/>
        </authorList>
    </citation>
    <scope>FUNCTION</scope>
    <scope>SUBCELLULAR LOCATION</scope>
    <scope>ALTERNATIVE SPLICING</scope>
    <scope>INTERACTION WITH AKT2 AND AKT3</scope>
</reference>
<reference key="9">
    <citation type="journal article" date="2008" name="J. Biol. Chem.">
        <title>The phosphatase PHLPP controls the cellular levels of protein kinase C.</title>
        <authorList>
            <person name="Gao T."/>
            <person name="Brognard J."/>
            <person name="Newton A.C."/>
        </authorList>
    </citation>
    <scope>FUNCTION</scope>
    <scope>INTERACTION WITH PRKCB</scope>
</reference>
<reference key="10">
    <citation type="journal article" date="2009" name="Cancer Cell">
        <title>FKBP51 affects cancer cell response to chemotherapy by negatively regulating Akt.</title>
        <authorList>
            <person name="Pei H."/>
            <person name="Li L."/>
            <person name="Fridley B.L."/>
            <person name="Jenkins G.D."/>
            <person name="Kalari K.R."/>
            <person name="Lingle W."/>
            <person name="Petersen G."/>
            <person name="Lou Z."/>
            <person name="Wang L."/>
        </authorList>
    </citation>
    <scope>INTERACTION WITH FKBP5; AKT2 AND AKT3</scope>
</reference>
<reference key="11">
    <citation type="journal article" date="2009" name="Oncogene">
        <title>Loss of PHLPP expression in colon cancer: role in proliferation and tumorigenesis.</title>
        <authorList>
            <person name="Liu J."/>
            <person name="Weiss H.L."/>
            <person name="Rychahou P."/>
            <person name="Jackson L.N."/>
            <person name="Evers B.M."/>
            <person name="Gao T."/>
        </authorList>
    </citation>
    <scope>FUNCTION</scope>
    <scope>SUBCELLULAR LOCATION</scope>
    <scope>TISSUE SPECIFICITY</scope>
</reference>
<reference key="12">
    <citation type="journal article" date="2010" name="Mol. Cell">
        <title>Mst1 is an interacting protein that mediates PHLPPs' induced apoptosis.</title>
        <authorList>
            <person name="Qiao M."/>
            <person name="Wang Y."/>
            <person name="Xu X."/>
            <person name="Lu J."/>
            <person name="Dong Y."/>
            <person name="Tao W."/>
            <person name="Stein J."/>
            <person name="Stein G.S."/>
            <person name="Iglehart J.D."/>
            <person name="Shi Q."/>
            <person name="Pardee A.B."/>
        </authorList>
    </citation>
    <scope>FUNCTION</scope>
    <scope>INTERACTION WITH STK4</scope>
</reference>
<reference key="13">
    <citation type="journal article" date="2011" name="EMBO Rep.">
        <title>Scribble-mediated membrane targeting of PHLPP1 is required for its negative regulation of Akt.</title>
        <authorList>
            <person name="Li X."/>
            <person name="Yang H."/>
            <person name="Liu J."/>
            <person name="Schmidt M.D."/>
            <person name="Gao T."/>
        </authorList>
    </citation>
    <scope>INTERACTION WITH SCRIB</scope>
</reference>
<reference key="14">
    <citation type="journal article" date="2011" name="Mol. Cell. Biol.">
        <title>PHLPP-mediated dephosphorylation of S6K1 inhibits protein translation and cell growth.</title>
        <authorList>
            <person name="Liu J."/>
            <person name="Stevens P.D."/>
            <person name="Li X."/>
            <person name="Schmidt M.D."/>
            <person name="Gao T."/>
        </authorList>
    </citation>
    <scope>FUNCTION</scope>
    <scope>INTERACTION WITH RPS6KB1</scope>
</reference>
<reference key="15">
    <citation type="journal article" date="2012" name="Oncogene">
        <title>PTEN, NHERF1 and PHLPP form a tumor suppressor network that is disabled in glioblastoma.</title>
        <authorList>
            <person name="Molina J.R."/>
            <person name="Agarwal N.K."/>
            <person name="Morales F.C."/>
            <person name="Hayashi Y."/>
            <person name="Aldape K.D."/>
            <person name="Cote G."/>
            <person name="Georgescu M.M."/>
        </authorList>
    </citation>
    <scope>INTERACTION WITH NHERF1</scope>
</reference>
<reference key="16">
    <citation type="journal article" date="2012" name="Proc. Natl. Acad. Sci. U.S.A.">
        <title>N-terminal acetylome analyses and functional insights of the N-terminal acetyltransferase NatB.</title>
        <authorList>
            <person name="Van Damme P."/>
            <person name="Lasa M."/>
            <person name="Polevoda B."/>
            <person name="Gazquez C."/>
            <person name="Elosegui-Artola A."/>
            <person name="Kim D.S."/>
            <person name="De Juan-Pardo E."/>
            <person name="Demeyer K."/>
            <person name="Hole K."/>
            <person name="Larrea E."/>
            <person name="Timmerman E."/>
            <person name="Prieto J."/>
            <person name="Arnesen T."/>
            <person name="Sherman F."/>
            <person name="Gevaert K."/>
            <person name="Aldabe R."/>
        </authorList>
    </citation>
    <scope>ACETYLATION [LARGE SCALE ANALYSIS] AT MET-1</scope>
    <scope>IDENTIFICATION BY MASS SPECTROMETRY [LARGE SCALE ANALYSIS]</scope>
</reference>
<reference key="17">
    <citation type="journal article" date="2013" name="J. Biol. Chem.">
        <title>WD repeat protein WDR48 in complex with deubiquitinase USP12 suppresses Akt-dependent cell survival signaling by stabilizing PH domain leucine-rich repeat protein phosphatase 1 (PHLPP1).</title>
        <authorList>
            <person name="Gangula N.R."/>
            <person name="Maddika S."/>
        </authorList>
    </citation>
    <scope>INTERACTION WITH WDR48 AND USP12</scope>
    <scope>ACTIVITY REGULATION</scope>
</reference>
<reference key="18">
    <citation type="journal article" date="2013" name="J. Proteome Res.">
        <title>Toward a comprehensive characterization of a human cancer cell phosphoproteome.</title>
        <authorList>
            <person name="Zhou H."/>
            <person name="Di Palma S."/>
            <person name="Preisinger C."/>
            <person name="Peng M."/>
            <person name="Polat A.N."/>
            <person name="Heck A.J."/>
            <person name="Mohammed S."/>
        </authorList>
    </citation>
    <scope>PHOSPHORYLATION [LARGE SCALE ANALYSIS] AT SER-317 AND SER-412</scope>
    <scope>IDENTIFICATION BY MASS SPECTROMETRY [LARGE SCALE ANALYSIS]</scope>
    <source>
        <tissue>Cervix carcinoma</tissue>
    </source>
</reference>
<reference key="19">
    <citation type="journal article" date="2014" name="Biochemistry">
        <title>Biochemical characterization of the phosphatase domain of the tumor suppressor PH domain leucine-rich repeat protein phosphatase.</title>
        <authorList>
            <person name="Sierecki E."/>
            <person name="Newton A.C."/>
        </authorList>
    </citation>
    <scope>CATALYTIC ACTIVITY</scope>
    <scope>BIOPHYSICOCHEMICAL PROPERTIES</scope>
    <scope>COFACTOR</scope>
</reference>
<reference key="20">
    <citation type="journal article" date="2014" name="Gastroenterology">
        <title>PHLPP is a negative regulator of RAF1, which reduces colorectal cancer cell motility and prevents tumor progression in mice.</title>
        <authorList>
            <person name="Li X."/>
            <person name="Stevens P.D."/>
            <person name="Liu J."/>
            <person name="Yang H."/>
            <person name="Wang W."/>
            <person name="Wang C."/>
            <person name="Zeng Z."/>
            <person name="Schmidt M.D."/>
            <person name="Yang M."/>
            <person name="Lee E.Y."/>
            <person name="Gao T."/>
        </authorList>
    </citation>
    <scope>FUNCTION</scope>
    <scope>INTERACTION WITH RAF1</scope>
</reference>
<reference key="21">
    <citation type="journal article" date="2015" name="Sci. Rep.">
        <title>Interactome of the negative regulator of nuclear import BRCA1-binding protein 2.</title>
        <authorList>
            <person name="Fatima S."/>
            <person name="Wagstaff K.M."/>
            <person name="Loveland K.L."/>
            <person name="Jans D.A."/>
        </authorList>
    </citation>
    <scope>INTERACTION WITH BRAP</scope>
</reference>
<protein>
    <recommendedName>
        <fullName>PH domain leucine-rich repeat-containing protein phosphatase 1</fullName>
        <ecNumber>3.1.3.16</ecNumber>
    </recommendedName>
    <alternativeName>
        <fullName>Pleckstrin homology domain-containing family E member 1</fullName>
        <shortName>PH domain-containing family E member 1</shortName>
    </alternativeName>
    <alternativeName>
        <fullName>Suprachiasmatic nucleus circadian oscillatory protein</fullName>
        <shortName>hSCOP</shortName>
    </alternativeName>
</protein>
<accession>O60346</accession>
<accession>A1A4F5</accession>
<accession>Q641Q7</accession>
<accession>Q6P4C4</accession>
<accession>Q6PJI6</accession>
<accession>Q86TN6</accession>
<accession>Q96FK2</accession>
<accession>Q9NUY1</accession>
<proteinExistence type="evidence at protein level"/>